<reference key="1">
    <citation type="journal article" date="2005" name="Science">
        <title>The transcriptional landscape of the mammalian genome.</title>
        <authorList>
            <person name="Carninci P."/>
            <person name="Kasukawa T."/>
            <person name="Katayama S."/>
            <person name="Gough J."/>
            <person name="Frith M.C."/>
            <person name="Maeda N."/>
            <person name="Oyama R."/>
            <person name="Ravasi T."/>
            <person name="Lenhard B."/>
            <person name="Wells C."/>
            <person name="Kodzius R."/>
            <person name="Shimokawa K."/>
            <person name="Bajic V.B."/>
            <person name="Brenner S.E."/>
            <person name="Batalov S."/>
            <person name="Forrest A.R."/>
            <person name="Zavolan M."/>
            <person name="Davis M.J."/>
            <person name="Wilming L.G."/>
            <person name="Aidinis V."/>
            <person name="Allen J.E."/>
            <person name="Ambesi-Impiombato A."/>
            <person name="Apweiler R."/>
            <person name="Aturaliya R.N."/>
            <person name="Bailey T.L."/>
            <person name="Bansal M."/>
            <person name="Baxter L."/>
            <person name="Beisel K.W."/>
            <person name="Bersano T."/>
            <person name="Bono H."/>
            <person name="Chalk A.M."/>
            <person name="Chiu K.P."/>
            <person name="Choudhary V."/>
            <person name="Christoffels A."/>
            <person name="Clutterbuck D.R."/>
            <person name="Crowe M.L."/>
            <person name="Dalla E."/>
            <person name="Dalrymple B.P."/>
            <person name="de Bono B."/>
            <person name="Della Gatta G."/>
            <person name="di Bernardo D."/>
            <person name="Down T."/>
            <person name="Engstrom P."/>
            <person name="Fagiolini M."/>
            <person name="Faulkner G."/>
            <person name="Fletcher C.F."/>
            <person name="Fukushima T."/>
            <person name="Furuno M."/>
            <person name="Futaki S."/>
            <person name="Gariboldi M."/>
            <person name="Georgii-Hemming P."/>
            <person name="Gingeras T.R."/>
            <person name="Gojobori T."/>
            <person name="Green R.E."/>
            <person name="Gustincich S."/>
            <person name="Harbers M."/>
            <person name="Hayashi Y."/>
            <person name="Hensch T.K."/>
            <person name="Hirokawa N."/>
            <person name="Hill D."/>
            <person name="Huminiecki L."/>
            <person name="Iacono M."/>
            <person name="Ikeo K."/>
            <person name="Iwama A."/>
            <person name="Ishikawa T."/>
            <person name="Jakt M."/>
            <person name="Kanapin A."/>
            <person name="Katoh M."/>
            <person name="Kawasawa Y."/>
            <person name="Kelso J."/>
            <person name="Kitamura H."/>
            <person name="Kitano H."/>
            <person name="Kollias G."/>
            <person name="Krishnan S.P."/>
            <person name="Kruger A."/>
            <person name="Kummerfeld S.K."/>
            <person name="Kurochkin I.V."/>
            <person name="Lareau L.F."/>
            <person name="Lazarevic D."/>
            <person name="Lipovich L."/>
            <person name="Liu J."/>
            <person name="Liuni S."/>
            <person name="McWilliam S."/>
            <person name="Madan Babu M."/>
            <person name="Madera M."/>
            <person name="Marchionni L."/>
            <person name="Matsuda H."/>
            <person name="Matsuzawa S."/>
            <person name="Miki H."/>
            <person name="Mignone F."/>
            <person name="Miyake S."/>
            <person name="Morris K."/>
            <person name="Mottagui-Tabar S."/>
            <person name="Mulder N."/>
            <person name="Nakano N."/>
            <person name="Nakauchi H."/>
            <person name="Ng P."/>
            <person name="Nilsson R."/>
            <person name="Nishiguchi S."/>
            <person name="Nishikawa S."/>
            <person name="Nori F."/>
            <person name="Ohara O."/>
            <person name="Okazaki Y."/>
            <person name="Orlando V."/>
            <person name="Pang K.C."/>
            <person name="Pavan W.J."/>
            <person name="Pavesi G."/>
            <person name="Pesole G."/>
            <person name="Petrovsky N."/>
            <person name="Piazza S."/>
            <person name="Reed J."/>
            <person name="Reid J.F."/>
            <person name="Ring B.Z."/>
            <person name="Ringwald M."/>
            <person name="Rost B."/>
            <person name="Ruan Y."/>
            <person name="Salzberg S.L."/>
            <person name="Sandelin A."/>
            <person name="Schneider C."/>
            <person name="Schoenbach C."/>
            <person name="Sekiguchi K."/>
            <person name="Semple C.A."/>
            <person name="Seno S."/>
            <person name="Sessa L."/>
            <person name="Sheng Y."/>
            <person name="Shibata Y."/>
            <person name="Shimada H."/>
            <person name="Shimada K."/>
            <person name="Silva D."/>
            <person name="Sinclair B."/>
            <person name="Sperling S."/>
            <person name="Stupka E."/>
            <person name="Sugiura K."/>
            <person name="Sultana R."/>
            <person name="Takenaka Y."/>
            <person name="Taki K."/>
            <person name="Tammoja K."/>
            <person name="Tan S.L."/>
            <person name="Tang S."/>
            <person name="Taylor M.S."/>
            <person name="Tegner J."/>
            <person name="Teichmann S.A."/>
            <person name="Ueda H.R."/>
            <person name="van Nimwegen E."/>
            <person name="Verardo R."/>
            <person name="Wei C.L."/>
            <person name="Yagi K."/>
            <person name="Yamanishi H."/>
            <person name="Zabarovsky E."/>
            <person name="Zhu S."/>
            <person name="Zimmer A."/>
            <person name="Hide W."/>
            <person name="Bult C."/>
            <person name="Grimmond S.M."/>
            <person name="Teasdale R.D."/>
            <person name="Liu E.T."/>
            <person name="Brusic V."/>
            <person name="Quackenbush J."/>
            <person name="Wahlestedt C."/>
            <person name="Mattick J.S."/>
            <person name="Hume D.A."/>
            <person name="Kai C."/>
            <person name="Sasaki D."/>
            <person name="Tomaru Y."/>
            <person name="Fukuda S."/>
            <person name="Kanamori-Katayama M."/>
            <person name="Suzuki M."/>
            <person name="Aoki J."/>
            <person name="Arakawa T."/>
            <person name="Iida J."/>
            <person name="Imamura K."/>
            <person name="Itoh M."/>
            <person name="Kato T."/>
            <person name="Kawaji H."/>
            <person name="Kawagashira N."/>
            <person name="Kawashima T."/>
            <person name="Kojima M."/>
            <person name="Kondo S."/>
            <person name="Konno H."/>
            <person name="Nakano K."/>
            <person name="Ninomiya N."/>
            <person name="Nishio T."/>
            <person name="Okada M."/>
            <person name="Plessy C."/>
            <person name="Shibata K."/>
            <person name="Shiraki T."/>
            <person name="Suzuki S."/>
            <person name="Tagami M."/>
            <person name="Waki K."/>
            <person name="Watahiki A."/>
            <person name="Okamura-Oho Y."/>
            <person name="Suzuki H."/>
            <person name="Kawai J."/>
            <person name="Hayashizaki Y."/>
        </authorList>
    </citation>
    <scope>NUCLEOTIDE SEQUENCE [LARGE SCALE MRNA]</scope>
    <source>
        <strain>C57BL/6J</strain>
        <tissue>Embryo</tissue>
    </source>
</reference>
<reference key="2">
    <citation type="journal article" date="2006" name="Dev. Dyn.">
        <title>Mohawk is a novel homeobox gene expressed in the developing mouse embryo.</title>
        <authorList>
            <person name="Anderson D.M."/>
            <person name="Arredondo J."/>
            <person name="Hahn K."/>
            <person name="Valente G."/>
            <person name="Martin J.F."/>
            <person name="Wilson-Rawls J."/>
            <person name="Rawls A."/>
        </authorList>
    </citation>
    <scope>FUNCTION</scope>
    <scope>DEVELOPMENTAL STAGE</scope>
</reference>
<sequence>MNTIVFNKLGGAVLFEDRGTPDRERGSRTFSGFLDNPHTGPEVGIPDGPPLKDNLSLRHRRTGARQNGGKVRHKRQALQDMARPLKQWLYKHRDNPYPTKTEKILLALGSQMTLVQVSNWFANARRRLKNTVRQPDLSWALRIKLYNKYVQGNAERLSVSSDGDSCSEDGENPPRNHMNEEGYSTPAHHTVIKGESSAIKAGGRPESRAAEDYVSPPKYKSSLLNRYLNDSLRHVMATSTAMMGKTRRRNHSGSFSSNEFEEELVSPSSSETEGTFVYRTDTPDIGSTKGDSAANRRGPSKDDTYWKEINAAMALTNLAQGKDEVQGTTSCIIQKSSHIAEVKTVKLPLVQRF</sequence>
<organism>
    <name type="scientific">Mus musculus</name>
    <name type="common">Mouse</name>
    <dbReference type="NCBI Taxonomy" id="10090"/>
    <lineage>
        <taxon>Eukaryota</taxon>
        <taxon>Metazoa</taxon>
        <taxon>Chordata</taxon>
        <taxon>Craniata</taxon>
        <taxon>Vertebrata</taxon>
        <taxon>Euteleostomi</taxon>
        <taxon>Mammalia</taxon>
        <taxon>Eutheria</taxon>
        <taxon>Euarchontoglires</taxon>
        <taxon>Glires</taxon>
        <taxon>Rodentia</taxon>
        <taxon>Myomorpha</taxon>
        <taxon>Muroidea</taxon>
        <taxon>Muridae</taxon>
        <taxon>Murinae</taxon>
        <taxon>Mus</taxon>
        <taxon>Mus</taxon>
    </lineage>
</organism>
<accession>Q8BIA3</accession>
<name>MKX_MOUSE</name>
<proteinExistence type="evidence at transcript level"/>
<evidence type="ECO:0000255" key="1">
    <source>
        <dbReference type="PROSITE-ProRule" id="PRU00108"/>
    </source>
</evidence>
<evidence type="ECO:0000256" key="2">
    <source>
        <dbReference type="SAM" id="MobiDB-lite"/>
    </source>
</evidence>
<evidence type="ECO:0000269" key="3">
    <source>
    </source>
</evidence>
<evidence type="ECO:0000305" key="4"/>
<feature type="chain" id="PRO_0000268857" description="Homeobox protein Mohawk">
    <location>
        <begin position="1"/>
        <end position="353"/>
    </location>
</feature>
<feature type="DNA-binding region" description="Homeobox; TALE-type" evidence="1">
    <location>
        <begin position="71"/>
        <end position="132"/>
    </location>
</feature>
<feature type="region of interest" description="Disordered" evidence="2">
    <location>
        <begin position="18"/>
        <end position="50"/>
    </location>
</feature>
<feature type="region of interest" description="Disordered" evidence="2">
    <location>
        <begin position="157"/>
        <end position="183"/>
    </location>
</feature>
<feature type="region of interest" description="Disordered" evidence="2">
    <location>
        <begin position="243"/>
        <end position="302"/>
    </location>
</feature>
<feature type="compositionally biased region" description="Basic and acidic residues" evidence="2">
    <location>
        <begin position="18"/>
        <end position="27"/>
    </location>
</feature>
<comment type="function">
    <text evidence="3">May act as a morphogenetic regulator of cell adhesion. Participates in the early events that lead to differentiation.</text>
</comment>
<comment type="subcellular location">
    <subcellularLocation>
        <location evidence="4">Nucleus</location>
    </subcellularLocation>
</comment>
<comment type="developmental stage">
    <text evidence="3">Transcribed in developmentally important regions that give rise to skeletal muscle, tendons, cartilage, male gonads, and the ureteric buds of the kidney. Expressed in discrete premyogenic cell populations of the somite, in the condensing prechondrogenic mesenchymal cells of the axial skeleton, in the pretendenous cells of the tail and limbs, the testis cords of the developing male gonad, and in the metanephric kidney.</text>
</comment>
<comment type="similarity">
    <text evidence="4">Belongs to the TALE/IRO homeobox family.</text>
</comment>
<gene>
    <name type="primary">Mkx</name>
</gene>
<protein>
    <recommendedName>
        <fullName>Homeobox protein Mohawk</fullName>
    </recommendedName>
</protein>
<keyword id="KW-0217">Developmental protein</keyword>
<keyword id="KW-0238">DNA-binding</keyword>
<keyword id="KW-0371">Homeobox</keyword>
<keyword id="KW-0539">Nucleus</keyword>
<keyword id="KW-1185">Reference proteome</keyword>
<dbReference type="EMBL" id="AK034675">
    <property type="protein sequence ID" value="BAC28793.1"/>
    <property type="molecule type" value="mRNA"/>
</dbReference>
<dbReference type="RefSeq" id="NP_808263.2">
    <property type="nucleotide sequence ID" value="NM_177595.4"/>
</dbReference>
<dbReference type="SMR" id="Q8BIA3"/>
<dbReference type="BioGRID" id="229176">
    <property type="interactions" value="2"/>
</dbReference>
<dbReference type="FunCoup" id="Q8BIA3">
    <property type="interactions" value="580"/>
</dbReference>
<dbReference type="STRING" id="10090.ENSMUSP00000078718"/>
<dbReference type="iPTMnet" id="Q8BIA3"/>
<dbReference type="PhosphoSitePlus" id="Q8BIA3"/>
<dbReference type="PaxDb" id="10090-ENSMUSP00000078718"/>
<dbReference type="ProteomicsDB" id="295678"/>
<dbReference type="DNASU" id="210719"/>
<dbReference type="GeneID" id="210719"/>
<dbReference type="KEGG" id="mmu:210719"/>
<dbReference type="AGR" id="MGI:2687286"/>
<dbReference type="CTD" id="283078"/>
<dbReference type="MGI" id="MGI:2687286">
    <property type="gene designation" value="Mkx"/>
</dbReference>
<dbReference type="eggNOG" id="KOG0773">
    <property type="taxonomic scope" value="Eukaryota"/>
</dbReference>
<dbReference type="InParanoid" id="Q8BIA3"/>
<dbReference type="OrthoDB" id="21495at2759"/>
<dbReference type="PhylomeDB" id="Q8BIA3"/>
<dbReference type="BioGRID-ORCS" id="210719">
    <property type="hits" value="2 hits in 76 CRISPR screens"/>
</dbReference>
<dbReference type="ChiTaRS" id="Mkx">
    <property type="organism name" value="mouse"/>
</dbReference>
<dbReference type="PRO" id="PR:Q8BIA3"/>
<dbReference type="Proteomes" id="UP000000589">
    <property type="component" value="Unplaced"/>
</dbReference>
<dbReference type="RNAct" id="Q8BIA3">
    <property type="molecule type" value="protein"/>
</dbReference>
<dbReference type="GO" id="GO:0005634">
    <property type="term" value="C:nucleus"/>
    <property type="evidence" value="ECO:0007669"/>
    <property type="project" value="UniProtKB-SubCell"/>
</dbReference>
<dbReference type="GO" id="GO:0005667">
    <property type="term" value="C:transcription regulator complex"/>
    <property type="evidence" value="ECO:0000305"/>
    <property type="project" value="MGI"/>
</dbReference>
<dbReference type="GO" id="GO:0001228">
    <property type="term" value="F:DNA-binding transcription activator activity, RNA polymerase II-specific"/>
    <property type="evidence" value="ECO:0000314"/>
    <property type="project" value="NTNU_SB"/>
</dbReference>
<dbReference type="GO" id="GO:0000981">
    <property type="term" value="F:DNA-binding transcription factor activity, RNA polymerase II-specific"/>
    <property type="evidence" value="ECO:0000314"/>
    <property type="project" value="MGI"/>
</dbReference>
<dbReference type="GO" id="GO:0001227">
    <property type="term" value="F:DNA-binding transcription repressor activity, RNA polymerase II-specific"/>
    <property type="evidence" value="ECO:0000314"/>
    <property type="project" value="NTNU_SB"/>
</dbReference>
<dbReference type="GO" id="GO:0000978">
    <property type="term" value="F:RNA polymerase II cis-regulatory region sequence-specific DNA binding"/>
    <property type="evidence" value="ECO:0000314"/>
    <property type="project" value="NTNU_SB"/>
</dbReference>
<dbReference type="GO" id="GO:0061629">
    <property type="term" value="F:RNA polymerase II-specific DNA-binding transcription factor binding"/>
    <property type="evidence" value="ECO:0000353"/>
    <property type="project" value="MGI"/>
</dbReference>
<dbReference type="GO" id="GO:0030199">
    <property type="term" value="P:collagen fibril organization"/>
    <property type="evidence" value="ECO:0000315"/>
    <property type="project" value="MGI"/>
</dbReference>
<dbReference type="GO" id="GO:0007517">
    <property type="term" value="P:muscle organ development"/>
    <property type="evidence" value="ECO:0000270"/>
    <property type="project" value="HGNC-UCL"/>
</dbReference>
<dbReference type="GO" id="GO:0045662">
    <property type="term" value="P:negative regulation of myoblast differentiation"/>
    <property type="evidence" value="ECO:0000314"/>
    <property type="project" value="MGI"/>
</dbReference>
<dbReference type="GO" id="GO:0000122">
    <property type="term" value="P:negative regulation of transcription by RNA polymerase II"/>
    <property type="evidence" value="ECO:0000314"/>
    <property type="project" value="MGI"/>
</dbReference>
<dbReference type="GO" id="GO:0032967">
    <property type="term" value="P:positive regulation of collagen biosynthetic process"/>
    <property type="evidence" value="ECO:0000315"/>
    <property type="project" value="MGI"/>
</dbReference>
<dbReference type="GO" id="GO:0010628">
    <property type="term" value="P:positive regulation of gene expression"/>
    <property type="evidence" value="ECO:0000315"/>
    <property type="project" value="MGI"/>
</dbReference>
<dbReference type="GO" id="GO:0045944">
    <property type="term" value="P:positive regulation of transcription by RNA polymerase II"/>
    <property type="evidence" value="ECO:0000315"/>
    <property type="project" value="NTNU_SB"/>
</dbReference>
<dbReference type="GO" id="GO:0010468">
    <property type="term" value="P:regulation of gene expression"/>
    <property type="evidence" value="ECO:0000315"/>
    <property type="project" value="MGI"/>
</dbReference>
<dbReference type="GO" id="GO:0035990">
    <property type="term" value="P:tendon cell differentiation"/>
    <property type="evidence" value="ECO:0000315"/>
    <property type="project" value="MGI"/>
</dbReference>
<dbReference type="GO" id="GO:0035992">
    <property type="term" value="P:tendon formation"/>
    <property type="evidence" value="ECO:0000315"/>
    <property type="project" value="MGI"/>
</dbReference>
<dbReference type="GO" id="GO:0002932">
    <property type="term" value="P:tendon sheath development"/>
    <property type="evidence" value="ECO:0000315"/>
    <property type="project" value="MGI"/>
</dbReference>
<dbReference type="CDD" id="cd00086">
    <property type="entry name" value="homeodomain"/>
    <property type="match status" value="1"/>
</dbReference>
<dbReference type="FunFam" id="1.10.10.60:FF:000003">
    <property type="entry name" value="Iroquois-class homeobox protein IRX"/>
    <property type="match status" value="1"/>
</dbReference>
<dbReference type="Gene3D" id="1.10.10.60">
    <property type="entry name" value="Homeodomain-like"/>
    <property type="match status" value="1"/>
</dbReference>
<dbReference type="InterPro" id="IPR001356">
    <property type="entry name" value="HD"/>
</dbReference>
<dbReference type="InterPro" id="IPR017970">
    <property type="entry name" value="Homeobox_CS"/>
</dbReference>
<dbReference type="InterPro" id="IPR009057">
    <property type="entry name" value="Homeodomain-like_sf"/>
</dbReference>
<dbReference type="InterPro" id="IPR008422">
    <property type="entry name" value="KN_HD"/>
</dbReference>
<dbReference type="PANTHER" id="PTHR11211:SF3">
    <property type="entry name" value="HOMEOBOX PROTEIN MOHAWK"/>
    <property type="match status" value="1"/>
</dbReference>
<dbReference type="PANTHER" id="PTHR11211">
    <property type="entry name" value="IROQUOIS-CLASS HOMEODOMAIN PROTEIN IRX"/>
    <property type="match status" value="1"/>
</dbReference>
<dbReference type="Pfam" id="PF05920">
    <property type="entry name" value="Homeobox_KN"/>
    <property type="match status" value="1"/>
</dbReference>
<dbReference type="SMART" id="SM00389">
    <property type="entry name" value="HOX"/>
    <property type="match status" value="1"/>
</dbReference>
<dbReference type="SUPFAM" id="SSF46689">
    <property type="entry name" value="Homeodomain-like"/>
    <property type="match status" value="1"/>
</dbReference>
<dbReference type="PROSITE" id="PS00027">
    <property type="entry name" value="HOMEOBOX_1"/>
    <property type="match status" value="1"/>
</dbReference>
<dbReference type="PROSITE" id="PS50071">
    <property type="entry name" value="HOMEOBOX_2"/>
    <property type="match status" value="1"/>
</dbReference>